<comment type="subcellular location">
    <subcellularLocation>
        <location evidence="1">Cell inner membrane</location>
        <topology evidence="1">Multi-pass membrane protein</topology>
    </subcellularLocation>
</comment>
<comment type="similarity">
    <text evidence="1">Belongs to the UPF0208 family.</text>
</comment>
<proteinExistence type="inferred from homology"/>
<name>YFBV_SALDC</name>
<protein>
    <recommendedName>
        <fullName evidence="1">UPF0208 membrane protein YfbV</fullName>
    </recommendedName>
</protein>
<dbReference type="EMBL" id="CP001144">
    <property type="protein sequence ID" value="ACH78034.1"/>
    <property type="molecule type" value="Genomic_DNA"/>
</dbReference>
<dbReference type="RefSeq" id="WP_000106617.1">
    <property type="nucleotide sequence ID" value="NC_011205.1"/>
</dbReference>
<dbReference type="KEGG" id="sed:SeD_A2684"/>
<dbReference type="HOGENOM" id="CLU_128746_0_0_6"/>
<dbReference type="Proteomes" id="UP000008322">
    <property type="component" value="Chromosome"/>
</dbReference>
<dbReference type="GO" id="GO:0005886">
    <property type="term" value="C:plasma membrane"/>
    <property type="evidence" value="ECO:0007669"/>
    <property type="project" value="UniProtKB-SubCell"/>
</dbReference>
<dbReference type="HAMAP" id="MF_01101">
    <property type="entry name" value="UPF0208"/>
    <property type="match status" value="1"/>
</dbReference>
<dbReference type="InterPro" id="IPR007334">
    <property type="entry name" value="UPF0208"/>
</dbReference>
<dbReference type="NCBIfam" id="NF002493">
    <property type="entry name" value="PRK01816.1"/>
    <property type="match status" value="1"/>
</dbReference>
<dbReference type="Pfam" id="PF04217">
    <property type="entry name" value="DUF412"/>
    <property type="match status" value="1"/>
</dbReference>
<keyword id="KW-0997">Cell inner membrane</keyword>
<keyword id="KW-1003">Cell membrane</keyword>
<keyword id="KW-0472">Membrane</keyword>
<keyword id="KW-0812">Transmembrane</keyword>
<keyword id="KW-1133">Transmembrane helix</keyword>
<gene>
    <name evidence="1" type="primary">yfbV</name>
    <name type="ordered locus">SeD_A2684</name>
</gene>
<sequence length="151" mass="17201">MSTPDNRSVNFFSLFRRGQHYAKTWPMEKRLAPVFVENRVIRMTRYAIRFMPPVAVFTLCWQIALGGQLGPAVATALFALSLPMQGLWWLGKRSVTPLPPSILNWFYEVRGKLQEAGQALAPVEGKPDYQALADTLKRAFKQLDKTFLDDL</sequence>
<organism>
    <name type="scientific">Salmonella dublin (strain CT_02021853)</name>
    <dbReference type="NCBI Taxonomy" id="439851"/>
    <lineage>
        <taxon>Bacteria</taxon>
        <taxon>Pseudomonadati</taxon>
        <taxon>Pseudomonadota</taxon>
        <taxon>Gammaproteobacteria</taxon>
        <taxon>Enterobacterales</taxon>
        <taxon>Enterobacteriaceae</taxon>
        <taxon>Salmonella</taxon>
    </lineage>
</organism>
<evidence type="ECO:0000255" key="1">
    <source>
        <dbReference type="HAMAP-Rule" id="MF_01101"/>
    </source>
</evidence>
<reference key="1">
    <citation type="journal article" date="2011" name="J. Bacteriol.">
        <title>Comparative genomics of 28 Salmonella enterica isolates: evidence for CRISPR-mediated adaptive sublineage evolution.</title>
        <authorList>
            <person name="Fricke W.F."/>
            <person name="Mammel M.K."/>
            <person name="McDermott P.F."/>
            <person name="Tartera C."/>
            <person name="White D.G."/>
            <person name="Leclerc J.E."/>
            <person name="Ravel J."/>
            <person name="Cebula T.A."/>
        </authorList>
    </citation>
    <scope>NUCLEOTIDE SEQUENCE [LARGE SCALE GENOMIC DNA]</scope>
    <source>
        <strain>CT_02021853</strain>
    </source>
</reference>
<feature type="chain" id="PRO_1000136996" description="UPF0208 membrane protein YfbV">
    <location>
        <begin position="1"/>
        <end position="151"/>
    </location>
</feature>
<feature type="transmembrane region" description="Helical" evidence="1">
    <location>
        <begin position="46"/>
        <end position="65"/>
    </location>
</feature>
<feature type="transmembrane region" description="Helical" evidence="1">
    <location>
        <begin position="69"/>
        <end position="91"/>
    </location>
</feature>
<accession>B5FPH7</accession>